<accession>O02193</accession>
<accession>A8B845</accession>
<accession>A8B850</accession>
<accession>A8B854</accession>
<accession>A8B859</accession>
<accession>A8B879</accession>
<accession>A8B889</accession>
<accession>A8B895</accession>
<accession>A8B8A1</accession>
<accession>A8ILB7</accession>
<accession>A8ILC1</accession>
<accession>A8ILC8</accession>
<accession>A8ILD1</accession>
<accession>A8ILD6</accession>
<accession>A8ILE1</accession>
<accession>A8ILE5</accession>
<accession>Q9W463</accession>
<comment type="function">
    <text evidence="6 7 8 9 12 13 14 15 16 19 20 21">Histone acetyltransferase that catalyzes the formation of the majority of histone H4 acetylation at 'Lys-16' (H4K16ac), an epigenetic mark that prevents chromatin compaction and constitutes the only acetylation mark intergenerationally transmitted (PubMed:10882077, PubMed:18510926, PubMed:20620953, PubMed:22421046, PubMed:32502394). Catalytic component of the male-specific lethal (MSL) complex, a multiprotein complex essential for elevating transcription of the single X chromosome in the male (X chromosome dosage compensation) (PubMed:10882077, PubMed:11014199, PubMed:16543150, PubMed:18510926, PubMed:34133927, PubMed:9155031). The MSL complex specifically associates with the single X chromosome in males and mediates formation of H4K16ac, promoting a two-fold activation of X chromosome (PubMed:11258702, PubMed:18510926, PubMed:20620953, PubMed:22421046). Dosage compensation ensures that males with a single X chromosome have the same amount of most X-linked gene products as females with two X chromosomes (PubMed:18510926, PubMed:9155031). In oocytes, mof is also part of a maternal MSL subcomplex that mediates H4K16ac deposition for intergenerational transmission: H4K16ac prepares the chromatin landscape for establishment of nucleosome accessibility and poises genes for future activation (PubMed:32502394). H4K16ac constitutes the only acetylation mark maintained from oocytes to fertilized embryos (PubMed:32502394). Mof also constitutes the catalytic component of the non-specific lethal (NLS) complex, which promotes expression of housekeeping genes on X chromosome and autosomes (PubMed:20620953, PubMed:20620954, PubMed:22723752). The NSL complex promotes strong expression of housekeeping genes compared to the two-fold expression mediated by the MSL complex on X chromosome, suggesting that the activation potential of mof is constrained in the context of dosage compensation (PubMed:20620953).</text>
</comment>
<comment type="catalytic activity">
    <reaction evidence="6 8 12 13 15 19 24">
        <text>L-lysyl-[histone] + acetyl-CoA = N(6)-acetyl-L-lysyl-[histone] + CoA + H(+)</text>
        <dbReference type="Rhea" id="RHEA:21992"/>
        <dbReference type="Rhea" id="RHEA-COMP:9845"/>
        <dbReference type="Rhea" id="RHEA-COMP:11338"/>
        <dbReference type="ChEBI" id="CHEBI:15378"/>
        <dbReference type="ChEBI" id="CHEBI:29969"/>
        <dbReference type="ChEBI" id="CHEBI:57287"/>
        <dbReference type="ChEBI" id="CHEBI:57288"/>
        <dbReference type="ChEBI" id="CHEBI:61930"/>
        <dbReference type="EC" id="2.3.1.48"/>
    </reaction>
    <physiologicalReaction direction="left-to-right" evidence="6 8 12 13 15 19 24">
        <dbReference type="Rhea" id="RHEA:21993"/>
    </physiologicalReaction>
</comment>
<comment type="subunit">
    <text evidence="5 7 9 12 13 14 15 16 19 20">Component of the male-specific lethal (MSL) histone acetyltransferase complex, composed of mof, mle, msl-1, msl-2 and msl-3 proteins, as well as roX1 and roX2 non-coding RNAs (PubMed:10679323, PubMed:11014199, PubMed:16543150, PubMed:18510926, PubMed:20620953, PubMed:20620954, PubMed:22421046). Component of a maternal MSL subcomplex composed of mof, msl-1 and msl-3 (PubMed:32502394). Component of the non-specific lethal (NLS) histone acetyltransferase complex at least composed of mof, nls1, dgt1/NSL2, Rcd1/NSL3, Rcd5/MCRS2, MBD-R2 and wds (PubMed:16543150, PubMed:20620953, PubMed:20620954, PubMed:22723752). In males, interacts with nucleoporin Mgtor (PubMed:34133927).</text>
</comment>
<comment type="interaction">
    <interactant intactId="EBI-138539">
        <id>O02193</id>
    </interactant>
    <interactant intactId="EBI-9630827">
        <id>A4V2Z1</id>
        <label>nsl1</label>
    </interactant>
    <organismsDiffer>false</organismsDiffer>
    <experiments>4</experiments>
</comment>
<comment type="subcellular location">
    <subcellularLocation>
        <location evidence="14">Nucleus</location>
    </subcellularLocation>
    <subcellularLocation>
        <location evidence="7 12 14 15 18">Chromosome</location>
    </subcellularLocation>
    <text evidence="7 12 13 15 18">When part of MSL complex, specifically localizes to many sites on the male X chromosome: displays a bimodal distribution binding to promoters and the 3' ends of genes (PubMed:11014199, PubMed:18510926, PubMed:22421046, PubMed:28510597). Recruited to the male X chromosome following association with roX1 and roX2 non-coding RNAs (PubMed:11014199). As part as the NSL complex, associates with promoters of housekeeping genes on X chromosome and autosomes genes (PubMed:18510926, PubMed:20620953).</text>
</comment>
<comment type="domain">
    <text evidence="7 15">The tudor-knot domain (also named chromobarrel domain) mediates association with roX1 and roX2 non-coding RNAs, promoting recruitment to the male X chromosome (PubMed:11014199). It also potentiates the histone acetyltransferase activity after chromatin binding (PubMed:22421046).</text>
</comment>
<comment type="PTM">
    <text evidence="1">Autoacetylation at Lys-638 is required for binding histone H4 with high affinity and for proper function.</text>
</comment>
<comment type="PTM">
    <text evidence="17 18">Ubiquitinated by msl-2.</text>
</comment>
<comment type="disruption phenotype">
    <text evidence="20">RNAi-mediated knockdown in male salivary glands, decreases chromosome X gene expression (PubMed:34133927). Simultaneous RNAi-mediated knockdown of mof with RNAi-mediated knockdown of Mgtor in male salivary glands rescues the decrease in chromosome X gene expression (PubMed:34133927).</text>
</comment>
<comment type="similarity">
    <text evidence="23">Belongs to the MYST (SAS/MOZ) family.</text>
</comment>
<proteinExistence type="evidence at protein level"/>
<gene>
    <name evidence="22 25" type="primary">mof</name>
    <name evidence="25" type="ORF">CG3025</name>
</gene>
<feature type="chain" id="PRO_0000051563" description="Histone acetyltransferase MOF">
    <location>
        <begin position="1"/>
        <end position="827"/>
    </location>
</feature>
<feature type="domain" description="Tudor-knot" evidence="2">
    <location>
        <begin position="382"/>
        <end position="433"/>
    </location>
</feature>
<feature type="domain" description="MYST-type HAT" evidence="3">
    <location>
        <begin position="538"/>
        <end position="813"/>
    </location>
</feature>
<feature type="zinc finger region" description="C2HC MYST-type" evidence="3">
    <location>
        <begin position="571"/>
        <end position="596"/>
    </location>
</feature>
<feature type="region of interest" description="Disordered" evidence="4">
    <location>
        <begin position="1"/>
        <end position="190"/>
    </location>
</feature>
<feature type="region of interest" description="Disordered" evidence="4">
    <location>
        <begin position="237"/>
        <end position="276"/>
    </location>
</feature>
<feature type="region of interest" description="Disordered" evidence="4">
    <location>
        <begin position="288"/>
        <end position="309"/>
    </location>
</feature>
<feature type="region of interest" description="Disordered" evidence="4">
    <location>
        <begin position="324"/>
        <end position="360"/>
    </location>
</feature>
<feature type="compositionally biased region" description="Acidic residues" evidence="4">
    <location>
        <begin position="19"/>
        <end position="30"/>
    </location>
</feature>
<feature type="compositionally biased region" description="Polar residues" evidence="4">
    <location>
        <begin position="55"/>
        <end position="69"/>
    </location>
</feature>
<feature type="compositionally biased region" description="Low complexity" evidence="4">
    <location>
        <begin position="103"/>
        <end position="116"/>
    </location>
</feature>
<feature type="compositionally biased region" description="Acidic residues" evidence="4">
    <location>
        <begin position="121"/>
        <end position="133"/>
    </location>
</feature>
<feature type="compositionally biased region" description="Basic and acidic residues" evidence="4">
    <location>
        <begin position="141"/>
        <end position="150"/>
    </location>
</feature>
<feature type="compositionally biased region" description="Acidic residues" evidence="4">
    <location>
        <begin position="176"/>
        <end position="186"/>
    </location>
</feature>
<feature type="compositionally biased region" description="Pro residues" evidence="4">
    <location>
        <begin position="243"/>
        <end position="253"/>
    </location>
</feature>
<feature type="compositionally biased region" description="Acidic residues" evidence="4">
    <location>
        <begin position="326"/>
        <end position="350"/>
    </location>
</feature>
<feature type="active site" description="Proton donor/acceptor" evidence="1">
    <location>
        <position position="714"/>
    </location>
</feature>
<feature type="binding site" evidence="1">
    <location>
        <position position="574"/>
    </location>
    <ligand>
        <name>Zn(2+)</name>
        <dbReference type="ChEBI" id="CHEBI:29105"/>
    </ligand>
</feature>
<feature type="binding site" evidence="1">
    <location>
        <position position="577"/>
    </location>
    <ligand>
        <name>Zn(2+)</name>
        <dbReference type="ChEBI" id="CHEBI:29105"/>
    </ligand>
</feature>
<feature type="binding site" evidence="1">
    <location>
        <position position="590"/>
    </location>
    <ligand>
        <name>Zn(2+)</name>
        <dbReference type="ChEBI" id="CHEBI:29105"/>
    </ligand>
</feature>
<feature type="binding site" evidence="1">
    <location>
        <position position="594"/>
    </location>
    <ligand>
        <name>Zn(2+)</name>
        <dbReference type="ChEBI" id="CHEBI:29105"/>
    </ligand>
</feature>
<feature type="binding site" evidence="1">
    <location>
        <position position="681"/>
    </location>
    <ligand>
        <name>acetyl-CoA</name>
        <dbReference type="ChEBI" id="CHEBI:57288"/>
    </ligand>
</feature>
<feature type="binding site" evidence="1">
    <location>
        <position position="689"/>
    </location>
    <ligand>
        <name>acetyl-CoA</name>
        <dbReference type="ChEBI" id="CHEBI:57288"/>
    </ligand>
</feature>
<feature type="binding site" evidence="1">
    <location>
        <position position="690"/>
    </location>
    <ligand>
        <name>acetyl-CoA</name>
        <dbReference type="ChEBI" id="CHEBI:57288"/>
    </ligand>
</feature>
<feature type="binding site" evidence="1">
    <location>
        <position position="691"/>
    </location>
    <ligand>
        <name>acetyl-CoA</name>
        <dbReference type="ChEBI" id="CHEBI:57288"/>
    </ligand>
</feature>
<feature type="binding site" evidence="1">
    <location>
        <position position="693"/>
    </location>
    <ligand>
        <name>acetyl-CoA</name>
        <dbReference type="ChEBI" id="CHEBI:57288"/>
    </ligand>
</feature>
<feature type="binding site" evidence="1">
    <location>
        <position position="694"/>
    </location>
    <ligand>
        <name>acetyl-CoA</name>
        <dbReference type="ChEBI" id="CHEBI:57288"/>
    </ligand>
</feature>
<feature type="binding site" evidence="1">
    <location>
        <position position="718"/>
    </location>
    <ligand>
        <name>acetyl-CoA</name>
        <dbReference type="ChEBI" id="CHEBI:57288"/>
    </ligand>
</feature>
<feature type="binding site" evidence="1">
    <location>
        <position position="727"/>
    </location>
    <ligand>
        <name>acetyl-CoA</name>
        <dbReference type="ChEBI" id="CHEBI:57288"/>
    </ligand>
</feature>
<feature type="binding site" evidence="1">
    <location>
        <position position="774"/>
    </location>
    <ligand>
        <name>acetyl-CoA</name>
        <dbReference type="ChEBI" id="CHEBI:57288"/>
    </ligand>
</feature>
<feature type="binding site" evidence="1">
    <location>
        <position position="798"/>
    </location>
    <ligand>
        <name>acetyl-CoA</name>
        <dbReference type="ChEBI" id="CHEBI:57288"/>
    </ligand>
</feature>
<feature type="modified residue" description="N6-acetyllysine; by autocatalysis" evidence="1">
    <location>
        <position position="638"/>
    </location>
</feature>
<feature type="cross-link" description="Glycyl lysine isopeptide (Lys-Gly) (interchain with G-Cter in ubiquitin)" evidence="18">
    <location>
        <position position="372"/>
    </location>
</feature>
<feature type="cross-link" description="Glycyl lysine isopeptide (Lys-Gly) (interchain with G-Cter in ubiquitin)" evidence="18">
    <location>
        <position position="483"/>
    </location>
</feature>
<feature type="cross-link" description="Glycyl lysine isopeptide (Lys-Gly) (interchain with G-Cter in ubiquitin)" evidence="18">
    <location>
        <position position="532"/>
    </location>
</feature>
<feature type="cross-link" description="Glycyl lysine isopeptide (Lys-Gly) (interchain with G-Cter in ubiquitin)" evidence="18">
    <location>
        <position position="539"/>
    </location>
</feature>
<feature type="cross-link" description="Glycyl lysine isopeptide (Lys-Gly) (interchain with G-Cter in ubiquitin)" evidence="18">
    <location>
        <position position="715"/>
    </location>
</feature>
<feature type="cross-link" description="Glycyl lysine isopeptide (Lys-Gly) (interchain with G-Cter in ubiquitin)" evidence="18">
    <location>
        <position position="749"/>
    </location>
</feature>
<feature type="cross-link" description="Glycyl lysine isopeptide (Lys-Gly) (interchain with G-Cter in ubiquitin)" evidence="18">
    <location>
        <position position="776"/>
    </location>
</feature>
<feature type="cross-link" description="Glycyl lysine isopeptide (Lys-Gly) (interchain with G-Cter in ubiquitin)" evidence="18">
    <location>
        <position position="798"/>
    </location>
</feature>
<feature type="cross-link" description="Glycyl lysine isopeptide (Lys-Gly) (interchain with G-Cter in ubiquitin)" evidence="18">
    <location>
        <position position="801"/>
    </location>
</feature>
<feature type="sequence variant" description="In strain: Congo 159, Congo 194 and Congo 216." evidence="10">
    <original>E</original>
    <variation>V</variation>
    <location>
        <position position="5"/>
    </location>
</feature>
<feature type="sequence variant" description="In strain: Africa-1 and Africa-5." evidence="10">
    <original>A</original>
    <variation>S</variation>
    <location>
        <position position="48"/>
    </location>
</feature>
<feature type="sequence variant" description="In strain: Congo 216." evidence="10">
    <original>D</original>
    <variation>E</variation>
    <location>
        <position position="119"/>
    </location>
</feature>
<feature type="sequence variant" description="In strain: Congo 8, Congo 13, Congo 194 and Mof.820A.s." evidence="10 11">
    <original>G</original>
    <variation>D</variation>
    <location>
        <position position="156"/>
    </location>
</feature>
<feature type="sequence variant" description="In strain: Africa-0." evidence="10">
    <original>G</original>
    <variation>C</variation>
    <location>
        <position position="202"/>
    </location>
</feature>
<feature type="sequence variant" description="In strain: Congo 194." evidence="10">
    <original>A</original>
    <variation>V</variation>
    <location>
        <position position="254"/>
    </location>
</feature>
<feature type="sequence variant" description="In strain: Africa-0, Africa-3, Africa-4, Congo 194 and Mof.591A.s." evidence="10 11">
    <original>F</original>
    <variation>Y</variation>
    <location>
        <position position="384"/>
    </location>
</feature>
<feature type="mutagenesis site" description="Abolished association with roX1 and roX2 non-coding RNAs and recruitment to the male X chromosome. Knockin flies show male lethality." evidence="7 15">
    <original>Y</original>
    <variation>D</variation>
    <location>
        <position position="416"/>
    </location>
</feature>
<feature type="mutagenesis site" description="Abolished association with roX1 and roX2 non-coding RNAs and recruitment to the male X chromosome. Knockin flies show male lethality." evidence="7 15">
    <original>W</original>
    <variation>G</variation>
    <location>
        <position position="426"/>
    </location>
</feature>
<feature type="mutagenesis site" description="Abolishes histone acetyltransferase activity." evidence="8">
    <original>C</original>
    <variation>G</variation>
    <location>
        <position position="577"/>
    </location>
</feature>
<feature type="mutagenesis site" description="Nearly abolishes histone acetyltransferase activity." evidence="8">
    <original>LKY</original>
    <variation>GYG</variation>
    <location>
        <begin position="578"/>
        <end position="580"/>
    </location>
</feature>
<feature type="mutagenesis site" description="Strongly reduces histone acetyltransferase activity. Males fail to metamorphose and hatch. Does not affect association with roX1 and roX2 non-coding RNAs." evidence="6 7 8 21">
    <original>G</original>
    <variation>E</variation>
    <location>
        <position position="691"/>
    </location>
</feature>
<feature type="strand" evidence="26">
    <location>
        <begin position="383"/>
        <end position="386"/>
    </location>
</feature>
<feature type="strand" evidence="26">
    <location>
        <begin position="392"/>
        <end position="401"/>
    </location>
</feature>
<feature type="turn" evidence="26">
    <location>
        <begin position="403"/>
        <end position="405"/>
    </location>
</feature>
<feature type="strand" evidence="26">
    <location>
        <begin position="411"/>
        <end position="415"/>
    </location>
</feature>
<feature type="strand" evidence="26">
    <location>
        <begin position="417"/>
        <end position="419"/>
    </location>
</feature>
<feature type="turn" evidence="26">
    <location>
        <begin position="421"/>
        <end position="423"/>
    </location>
</feature>
<feature type="strand" evidence="26">
    <location>
        <begin position="425"/>
        <end position="428"/>
    </location>
</feature>
<feature type="turn" evidence="26">
    <location>
        <begin position="429"/>
        <end position="431"/>
    </location>
</feature>
<feature type="strand" evidence="26">
    <location>
        <begin position="432"/>
        <end position="434"/>
    </location>
</feature>
<feature type="helix" evidence="26">
    <location>
        <begin position="436"/>
        <end position="440"/>
    </location>
</feature>
<feature type="turn" evidence="26">
    <location>
        <begin position="441"/>
        <end position="443"/>
    </location>
</feature>
<evidence type="ECO:0000250" key="1">
    <source>
        <dbReference type="UniProtKB" id="Q9H7Z6"/>
    </source>
</evidence>
<evidence type="ECO:0000255" key="2"/>
<evidence type="ECO:0000255" key="3">
    <source>
        <dbReference type="PROSITE-ProRule" id="PRU01063"/>
    </source>
</evidence>
<evidence type="ECO:0000256" key="4">
    <source>
        <dbReference type="SAM" id="MobiDB-lite"/>
    </source>
</evidence>
<evidence type="ECO:0000269" key="5">
    <source>
    </source>
</evidence>
<evidence type="ECO:0000269" key="6">
    <source>
    </source>
</evidence>
<evidence type="ECO:0000269" key="7">
    <source>
    </source>
</evidence>
<evidence type="ECO:0000269" key="8">
    <source>
    </source>
</evidence>
<evidence type="ECO:0000269" key="9">
    <source>
    </source>
</evidence>
<evidence type="ECO:0000269" key="10">
    <source>
    </source>
</evidence>
<evidence type="ECO:0000269" key="11">
    <source>
    </source>
</evidence>
<evidence type="ECO:0000269" key="12">
    <source>
    </source>
</evidence>
<evidence type="ECO:0000269" key="13">
    <source>
    </source>
</evidence>
<evidence type="ECO:0000269" key="14">
    <source>
    </source>
</evidence>
<evidence type="ECO:0000269" key="15">
    <source>
    </source>
</evidence>
<evidence type="ECO:0000269" key="16">
    <source>
    </source>
</evidence>
<evidence type="ECO:0000269" key="17">
    <source>
    </source>
</evidence>
<evidence type="ECO:0000269" key="18">
    <source>
    </source>
</evidence>
<evidence type="ECO:0000269" key="19">
    <source>
    </source>
</evidence>
<evidence type="ECO:0000269" key="20">
    <source>
    </source>
</evidence>
<evidence type="ECO:0000269" key="21">
    <source>
    </source>
</evidence>
<evidence type="ECO:0000303" key="22">
    <source>
    </source>
</evidence>
<evidence type="ECO:0000305" key="23"/>
<evidence type="ECO:0000305" key="24">
    <source>
    </source>
</evidence>
<evidence type="ECO:0000312" key="25">
    <source>
        <dbReference type="FlyBase" id="FBgn0014340"/>
    </source>
</evidence>
<evidence type="ECO:0007829" key="26">
    <source>
        <dbReference type="PDB" id="2BUD"/>
    </source>
</evidence>
<protein>
    <recommendedName>
        <fullName evidence="23">Histone acetyltransferase MOF</fullName>
        <ecNumber evidence="6 8 12 13 15 24">2.3.1.48</ecNumber>
    </recommendedName>
    <alternativeName>
        <fullName evidence="22">Males-absent on the first protein</fullName>
    </alternativeName>
</protein>
<sequence length="827" mass="92657">MSEAELEQTPSAGHVQEQPIEEEHEPEQEPTDAYTIGGPPRTPVEDAAAELSASLDVSGSDQSAEQSLDLSGVQAEAAAESEPPAKRQHRDISPISEDSTPASSTSTSSTRSSSSSRYDDVSEAEEAPPEPEPEQPQQQQQEEKKEDGQDQVKSPGPVELEAQEPAQPQKQKEVVDQEIETEDEPSSDTVICVADINPYGSGSNIDDFVMDPDAPPNAIITEVVTIPAPLHLKGTQQLGLPLAAPPPPPPPPAAEQVPETPASPTDDGEEPPAVYLSPYIRSRYMQESTPGLPTRLAPRDPRQRNMPPPAVVLPIQTVLSANVEAISDDSSETSSSDDDEEEEEDEDDALTMEHDNTSRETVITTGDPLMQKIDISENPDKIYFIRREDGTVHRGQVLQSRTTENAAAPDEYYVHYVGLNRRLDGWVGRHRISDNADDLGGITVLPAPPLAPDQPSTSREMLAQQAAAAAAASSERQKRAANKDYYLSYCENSRYDYSDRKMTRYQKRRYDEINHVQKSHAELTATQAALEKEHESITKIKYIDKLQFGNYEIDTWYFSPFPEEYGKARTLYVCEYCLKYMRFRSSYAYHLHECDRRRPPGREIYRKGNISIYEVNGKEESLYCQLLCLMAKLFLDHKVLYFDMDPFLFYILCETDKEGSHIVGYFSKEKKSLENYNVACILVLPPHQRKGFGKLLIAFSYELSRKEGVIGSPEKPLSDLGRLSYRSYWAYTLLELMKTRCAPEQITIKELSEMSGITHDDIIYTLQSMKMIKYWKGQNVICVTSKTIQDHLQLPQFKQPKLTIDTDYLVWSPQTAAAVVRAPGNSG</sequence>
<dbReference type="EC" id="2.3.1.48" evidence="6 8 12 13 15 24"/>
<dbReference type="EMBL" id="U71219">
    <property type="protein sequence ID" value="AAC47507.1"/>
    <property type="molecule type" value="Genomic_DNA"/>
</dbReference>
<dbReference type="EMBL" id="EF630368">
    <property type="protein sequence ID" value="ABU97211.1"/>
    <property type="molecule type" value="Genomic_DNA"/>
</dbReference>
<dbReference type="EMBL" id="EF630369">
    <property type="protein sequence ID" value="ABU97212.1"/>
    <property type="molecule type" value="Genomic_DNA"/>
</dbReference>
<dbReference type="EMBL" id="EF630370">
    <property type="protein sequence ID" value="ABU97213.1"/>
    <property type="molecule type" value="Genomic_DNA"/>
</dbReference>
<dbReference type="EMBL" id="EF630371">
    <property type="protein sequence ID" value="ABU97214.1"/>
    <property type="molecule type" value="Genomic_DNA"/>
</dbReference>
<dbReference type="EMBL" id="EF630372">
    <property type="protein sequence ID" value="ABU97215.1"/>
    <property type="molecule type" value="Genomic_DNA"/>
</dbReference>
<dbReference type="EMBL" id="EF630373">
    <property type="protein sequence ID" value="ABU97216.1"/>
    <property type="molecule type" value="Genomic_DNA"/>
</dbReference>
<dbReference type="EMBL" id="EF630374">
    <property type="protein sequence ID" value="ABU97217.1"/>
    <property type="molecule type" value="Genomic_DNA"/>
</dbReference>
<dbReference type="EMBL" id="EF630375">
    <property type="protein sequence ID" value="ABU97218.1"/>
    <property type="molecule type" value="Genomic_DNA"/>
</dbReference>
<dbReference type="EMBL" id="EF630376">
    <property type="protein sequence ID" value="ABU97219.1"/>
    <property type="molecule type" value="Genomic_DNA"/>
</dbReference>
<dbReference type="EMBL" id="EF630377">
    <property type="protein sequence ID" value="ABU97220.1"/>
    <property type="molecule type" value="Genomic_DNA"/>
</dbReference>
<dbReference type="EMBL" id="EF630378">
    <property type="protein sequence ID" value="ABU97221.1"/>
    <property type="molecule type" value="Genomic_DNA"/>
</dbReference>
<dbReference type="EMBL" id="EF630379">
    <property type="protein sequence ID" value="ABU97222.1"/>
    <property type="molecule type" value="Genomic_DNA"/>
</dbReference>
<dbReference type="EMBL" id="AE014298">
    <property type="protein sequence ID" value="AAF46095.1"/>
    <property type="molecule type" value="Genomic_DNA"/>
</dbReference>
<dbReference type="EMBL" id="AY102685">
    <property type="protein sequence ID" value="AAM27514.1"/>
    <property type="molecule type" value="mRNA"/>
</dbReference>
<dbReference type="EMBL" id="EU167134">
    <property type="protein sequence ID" value="ABV82526.1"/>
    <property type="molecule type" value="Genomic_DNA"/>
</dbReference>
<dbReference type="EMBL" id="EU167135">
    <property type="protein sequence ID" value="ABV82527.1"/>
    <property type="molecule type" value="Genomic_DNA"/>
</dbReference>
<dbReference type="EMBL" id="EU167136">
    <property type="protein sequence ID" value="ABV82528.1"/>
    <property type="molecule type" value="Genomic_DNA"/>
</dbReference>
<dbReference type="EMBL" id="EU167137">
    <property type="protein sequence ID" value="ABV82529.1"/>
    <property type="molecule type" value="Genomic_DNA"/>
</dbReference>
<dbReference type="EMBL" id="EU167138">
    <property type="protein sequence ID" value="ABV82530.1"/>
    <property type="molecule type" value="Genomic_DNA"/>
</dbReference>
<dbReference type="EMBL" id="EU167139">
    <property type="protein sequence ID" value="ABV82531.1"/>
    <property type="molecule type" value="Genomic_DNA"/>
</dbReference>
<dbReference type="EMBL" id="EU167140">
    <property type="protein sequence ID" value="ABV82532.1"/>
    <property type="molecule type" value="Genomic_DNA"/>
</dbReference>
<dbReference type="EMBL" id="EU167141">
    <property type="protein sequence ID" value="ABV82533.1"/>
    <property type="molecule type" value="Genomic_DNA"/>
</dbReference>
<dbReference type="RefSeq" id="NP_511051.1">
    <property type="nucleotide sequence ID" value="NM_078496.3"/>
</dbReference>
<dbReference type="PDB" id="2BUD">
    <property type="method" value="NMR"/>
    <property type="chains" value="A=367-454"/>
</dbReference>
<dbReference type="PDBsum" id="2BUD"/>
<dbReference type="SMR" id="O02193"/>
<dbReference type="BioGRID" id="58017">
    <property type="interactions" value="31"/>
</dbReference>
<dbReference type="ComplexPortal" id="CPX-2340">
    <property type="entry name" value="Male specific lethal complex"/>
</dbReference>
<dbReference type="DIP" id="DIP-46346N"/>
<dbReference type="FunCoup" id="O02193">
    <property type="interactions" value="1614"/>
</dbReference>
<dbReference type="IntAct" id="O02193">
    <property type="interactions" value="6"/>
</dbReference>
<dbReference type="STRING" id="7227.FBpp0070794"/>
<dbReference type="GlyGen" id="O02193">
    <property type="glycosylation" value="1 site"/>
</dbReference>
<dbReference type="PaxDb" id="7227-FBpp0070794"/>
<dbReference type="EnsemblMetazoa" id="FBtr0070829">
    <property type="protein sequence ID" value="FBpp0070794"/>
    <property type="gene ID" value="FBgn0014340"/>
</dbReference>
<dbReference type="GeneID" id="31518"/>
<dbReference type="KEGG" id="dme:Dmel_CG3025"/>
<dbReference type="AGR" id="FB:FBgn0014340"/>
<dbReference type="CTD" id="31518"/>
<dbReference type="FlyBase" id="FBgn0014340">
    <property type="gene designation" value="mof"/>
</dbReference>
<dbReference type="VEuPathDB" id="VectorBase:FBgn0014340"/>
<dbReference type="eggNOG" id="KOG2747">
    <property type="taxonomic scope" value="Eukaryota"/>
</dbReference>
<dbReference type="GeneTree" id="ENSGT00940000159512"/>
<dbReference type="HOGENOM" id="CLU_012139_1_0_1"/>
<dbReference type="InParanoid" id="O02193"/>
<dbReference type="OMA" id="SNTVICV"/>
<dbReference type="OrthoDB" id="787137at2759"/>
<dbReference type="PhylomeDB" id="O02193"/>
<dbReference type="BRENDA" id="2.3.1.48">
    <property type="organism ID" value="1994"/>
</dbReference>
<dbReference type="Reactome" id="R-DME-3214847">
    <property type="pathway name" value="HATs acetylate histones"/>
</dbReference>
<dbReference type="Reactome" id="R-DME-9772755">
    <property type="pathway name" value="Formation of WDR5-containing histone-modifying complexes"/>
</dbReference>
<dbReference type="BioGRID-ORCS" id="31518">
    <property type="hits" value="0 hits in 1 CRISPR screen"/>
</dbReference>
<dbReference type="EvolutionaryTrace" id="O02193"/>
<dbReference type="GenomeRNAi" id="31518"/>
<dbReference type="PRO" id="PR:O02193"/>
<dbReference type="Proteomes" id="UP000000803">
    <property type="component" value="Chromosome X"/>
</dbReference>
<dbReference type="Bgee" id="FBgn0014340">
    <property type="expression patterns" value="Expressed in cleaving embryo and 29 other cell types or tissues"/>
</dbReference>
<dbReference type="ExpressionAtlas" id="O02193">
    <property type="expression patterns" value="baseline and differential"/>
</dbReference>
<dbReference type="GO" id="GO:0072487">
    <property type="term" value="C:MSL complex"/>
    <property type="evidence" value="ECO:0000314"/>
    <property type="project" value="UniProtKB"/>
</dbReference>
<dbReference type="GO" id="GO:0044545">
    <property type="term" value="C:NSL complex"/>
    <property type="evidence" value="ECO:0000314"/>
    <property type="project" value="UniProtKB"/>
</dbReference>
<dbReference type="GO" id="GO:0035267">
    <property type="term" value="C:NuA4 histone acetyltransferase complex"/>
    <property type="evidence" value="ECO:0000318"/>
    <property type="project" value="GO_Central"/>
</dbReference>
<dbReference type="GO" id="GO:0000228">
    <property type="term" value="C:nuclear chromosome"/>
    <property type="evidence" value="ECO:0000314"/>
    <property type="project" value="FlyBase"/>
</dbReference>
<dbReference type="GO" id="GO:0005634">
    <property type="term" value="C:nucleus"/>
    <property type="evidence" value="ECO:0000314"/>
    <property type="project" value="FlyBase"/>
</dbReference>
<dbReference type="GO" id="GO:0005705">
    <property type="term" value="C:polytene chromosome interband"/>
    <property type="evidence" value="ECO:0000314"/>
    <property type="project" value="FlyBase"/>
</dbReference>
<dbReference type="GO" id="GO:0005667">
    <property type="term" value="C:transcription regulator complex"/>
    <property type="evidence" value="ECO:0000314"/>
    <property type="project" value="FlyBase"/>
</dbReference>
<dbReference type="GO" id="GO:0000805">
    <property type="term" value="C:X chromosome"/>
    <property type="evidence" value="ECO:0000314"/>
    <property type="project" value="UniProtKB"/>
</dbReference>
<dbReference type="GO" id="GO:0016456">
    <property type="term" value="C:X chromosome located dosage compensation complex, transcription activating"/>
    <property type="evidence" value="ECO:0000314"/>
    <property type="project" value="UniProtKB"/>
</dbReference>
<dbReference type="GO" id="GO:0003682">
    <property type="term" value="F:chromatin binding"/>
    <property type="evidence" value="ECO:0000314"/>
    <property type="project" value="FlyBase"/>
</dbReference>
<dbReference type="GO" id="GO:0004402">
    <property type="term" value="F:histone acetyltransferase activity"/>
    <property type="evidence" value="ECO:0000314"/>
    <property type="project" value="FlyBase"/>
</dbReference>
<dbReference type="GO" id="GO:0046972">
    <property type="term" value="F:histone H4K16 acetyltransferase activity"/>
    <property type="evidence" value="ECO:0000314"/>
    <property type="project" value="UniProtKB"/>
</dbReference>
<dbReference type="GO" id="GO:0106222">
    <property type="term" value="F:lncRNA binding"/>
    <property type="evidence" value="ECO:0000314"/>
    <property type="project" value="UniProtKB"/>
</dbReference>
<dbReference type="GO" id="GO:0008270">
    <property type="term" value="F:zinc ion binding"/>
    <property type="evidence" value="ECO:0007669"/>
    <property type="project" value="UniProtKB-KW"/>
</dbReference>
<dbReference type="GO" id="GO:0030330">
    <property type="term" value="P:DNA damage response, signal transduction by p53 class mediator"/>
    <property type="evidence" value="ECO:0000315"/>
    <property type="project" value="FlyBase"/>
</dbReference>
<dbReference type="GO" id="GO:0140861">
    <property type="term" value="P:DNA repair-dependent chromatin remodeling"/>
    <property type="evidence" value="ECO:0000315"/>
    <property type="project" value="FlyBase"/>
</dbReference>
<dbReference type="GO" id="GO:0009047">
    <property type="term" value="P:dosage compensation by hyperactivation of X chromosome"/>
    <property type="evidence" value="ECO:0000314"/>
    <property type="project" value="UniProtKB"/>
</dbReference>
<dbReference type="GO" id="GO:0045893">
    <property type="term" value="P:positive regulation of DNA-templated transcription"/>
    <property type="evidence" value="ECO:0000315"/>
    <property type="project" value="FlyBase"/>
</dbReference>
<dbReference type="GO" id="GO:0141137">
    <property type="term" value="P:positive regulation of gene expression, epigenetic"/>
    <property type="evidence" value="ECO:0000314"/>
    <property type="project" value="UniProtKB"/>
</dbReference>
<dbReference type="GO" id="GO:0007549">
    <property type="term" value="P:sex-chromosome dosage compensation"/>
    <property type="evidence" value="ECO:0000314"/>
    <property type="project" value="UniProtKB"/>
</dbReference>
<dbReference type="CDD" id="cd18984">
    <property type="entry name" value="CBD_MOF_like"/>
    <property type="match status" value="1"/>
</dbReference>
<dbReference type="CDD" id="cd04301">
    <property type="entry name" value="NAT_SF"/>
    <property type="match status" value="1"/>
</dbReference>
<dbReference type="FunFam" id="1.10.10.10:FF:000022">
    <property type="entry name" value="Histone acetyltransferase"/>
    <property type="match status" value="1"/>
</dbReference>
<dbReference type="FunFam" id="3.30.60.60:FF:000001">
    <property type="entry name" value="Histone acetyltransferase"/>
    <property type="match status" value="1"/>
</dbReference>
<dbReference type="FunFam" id="3.40.630.30:FF:000002">
    <property type="entry name" value="Histone acetyltransferase"/>
    <property type="match status" value="1"/>
</dbReference>
<dbReference type="Gene3D" id="2.30.30.140">
    <property type="match status" value="1"/>
</dbReference>
<dbReference type="Gene3D" id="3.40.630.30">
    <property type="match status" value="1"/>
</dbReference>
<dbReference type="Gene3D" id="3.30.60.60">
    <property type="entry name" value="N-acetyl transferase-like"/>
    <property type="match status" value="1"/>
</dbReference>
<dbReference type="Gene3D" id="1.10.10.10">
    <property type="entry name" value="Winged helix-like DNA-binding domain superfamily/Winged helix DNA-binding domain"/>
    <property type="match status" value="1"/>
</dbReference>
<dbReference type="InterPro" id="IPR016181">
    <property type="entry name" value="Acyl_CoA_acyltransferase"/>
</dbReference>
<dbReference type="InterPro" id="IPR016197">
    <property type="entry name" value="Chromo-like_dom_sf"/>
</dbReference>
<dbReference type="InterPro" id="IPR002717">
    <property type="entry name" value="HAT_MYST-type"/>
</dbReference>
<dbReference type="InterPro" id="IPR050603">
    <property type="entry name" value="MYST_HAT"/>
</dbReference>
<dbReference type="InterPro" id="IPR025995">
    <property type="entry name" value="Tudor-knot"/>
</dbReference>
<dbReference type="InterPro" id="IPR036388">
    <property type="entry name" value="WH-like_DNA-bd_sf"/>
</dbReference>
<dbReference type="InterPro" id="IPR040706">
    <property type="entry name" value="Zf-MYST"/>
</dbReference>
<dbReference type="PANTHER" id="PTHR10615">
    <property type="entry name" value="HISTONE ACETYLTRANSFERASE"/>
    <property type="match status" value="1"/>
</dbReference>
<dbReference type="PANTHER" id="PTHR10615:SF82">
    <property type="entry name" value="HISTONE ACETYLTRANSFERASE KAT8"/>
    <property type="match status" value="1"/>
</dbReference>
<dbReference type="Pfam" id="PF01853">
    <property type="entry name" value="MOZ_SAS"/>
    <property type="match status" value="1"/>
</dbReference>
<dbReference type="Pfam" id="PF11717">
    <property type="entry name" value="Tudor-knot"/>
    <property type="match status" value="1"/>
</dbReference>
<dbReference type="Pfam" id="PF17772">
    <property type="entry name" value="zf-MYST"/>
    <property type="match status" value="1"/>
</dbReference>
<dbReference type="SUPFAM" id="SSF55729">
    <property type="entry name" value="Acyl-CoA N-acyltransferases (Nat)"/>
    <property type="match status" value="1"/>
</dbReference>
<dbReference type="SUPFAM" id="SSF54160">
    <property type="entry name" value="Chromo domain-like"/>
    <property type="match status" value="1"/>
</dbReference>
<dbReference type="PROSITE" id="PS51726">
    <property type="entry name" value="MYST_HAT"/>
    <property type="match status" value="1"/>
</dbReference>
<keyword id="KW-0002">3D-structure</keyword>
<keyword id="KW-0007">Acetylation</keyword>
<keyword id="KW-0012">Acyltransferase</keyword>
<keyword id="KW-0156">Chromatin regulator</keyword>
<keyword id="KW-0158">Chromosome</keyword>
<keyword id="KW-1017">Isopeptide bond</keyword>
<keyword id="KW-0479">Metal-binding</keyword>
<keyword id="KW-0539">Nucleus</keyword>
<keyword id="KW-1185">Reference proteome</keyword>
<keyword id="KW-0808">Transferase</keyword>
<keyword id="KW-0832">Ubl conjugation</keyword>
<keyword id="KW-0862">Zinc</keyword>
<keyword id="KW-0863">Zinc-finger</keyword>
<name>MOF_DROME</name>
<organism>
    <name type="scientific">Drosophila melanogaster</name>
    <name type="common">Fruit fly</name>
    <dbReference type="NCBI Taxonomy" id="7227"/>
    <lineage>
        <taxon>Eukaryota</taxon>
        <taxon>Metazoa</taxon>
        <taxon>Ecdysozoa</taxon>
        <taxon>Arthropoda</taxon>
        <taxon>Hexapoda</taxon>
        <taxon>Insecta</taxon>
        <taxon>Pterygota</taxon>
        <taxon>Neoptera</taxon>
        <taxon>Endopterygota</taxon>
        <taxon>Diptera</taxon>
        <taxon>Brachycera</taxon>
        <taxon>Muscomorpha</taxon>
        <taxon>Ephydroidea</taxon>
        <taxon>Drosophilidae</taxon>
        <taxon>Drosophila</taxon>
        <taxon>Sophophora</taxon>
    </lineage>
</organism>
<reference key="1">
    <citation type="journal article" date="1997" name="EMBO J.">
        <title>mof, a putative acetyl transferase gene related to the Tip60 and MOZ human genes and to the SAS genes of yeast, is required for dosage compensation in Drosophila.</title>
        <authorList>
            <person name="Hilfiker A."/>
            <person name="Hilfiker-Kleiner D."/>
            <person name="Pannuti A."/>
            <person name="Lucchesi J.C."/>
        </authorList>
    </citation>
    <scope>NUCLEOTIDE SEQUENCE [GENOMIC DNA]</scope>
    <scope>FUNCTION</scope>
    <scope>MUTAGENESIS OF GLY-691</scope>
</reference>
<reference key="2">
    <citation type="journal article" date="2007" name="Proc. Natl. Acad. Sci. U.S.A.">
        <title>Species-specific positive selection of the male-specific lethal complex that participates in dosage compensation in Drosophila.</title>
        <authorList>
            <person name="Rodriguez M.A."/>
            <person name="Vermaak D."/>
            <person name="Bayes J.J."/>
            <person name="Malik H.S."/>
        </authorList>
    </citation>
    <scope>NUCLEOTIDE SEQUENCE [GENOMIC DNA]</scope>
    <scope>VARIANTS VAL-5; SER-48; GLU-119; ASP-156; CYS-202; VAL-254 AND TYR-384</scope>
    <source>
        <strain>Africa-1</strain>
        <strain>Africa-3</strain>
        <strain>Africa-4</strain>
        <strain>Africa-5</strain>
        <strain>Africa-7</strain>
        <strain>Amherst</strain>
        <strain>Congo 13</strain>
        <strain>Congo 159</strain>
        <strain>Congo 194</strain>
        <strain>Congo 216</strain>
        <strain>Congo 8</strain>
    </source>
</reference>
<reference key="3">
    <citation type="journal article" date="2000" name="Science">
        <title>The genome sequence of Drosophila melanogaster.</title>
        <authorList>
            <person name="Adams M.D."/>
            <person name="Celniker S.E."/>
            <person name="Holt R.A."/>
            <person name="Evans C.A."/>
            <person name="Gocayne J.D."/>
            <person name="Amanatides P.G."/>
            <person name="Scherer S.E."/>
            <person name="Li P.W."/>
            <person name="Hoskins R.A."/>
            <person name="Galle R.F."/>
            <person name="George R.A."/>
            <person name="Lewis S.E."/>
            <person name="Richards S."/>
            <person name="Ashburner M."/>
            <person name="Henderson S.N."/>
            <person name="Sutton G.G."/>
            <person name="Wortman J.R."/>
            <person name="Yandell M.D."/>
            <person name="Zhang Q."/>
            <person name="Chen L.X."/>
            <person name="Brandon R.C."/>
            <person name="Rogers Y.-H.C."/>
            <person name="Blazej R.G."/>
            <person name="Champe M."/>
            <person name="Pfeiffer B.D."/>
            <person name="Wan K.H."/>
            <person name="Doyle C."/>
            <person name="Baxter E.G."/>
            <person name="Helt G."/>
            <person name="Nelson C.R."/>
            <person name="Miklos G.L.G."/>
            <person name="Abril J.F."/>
            <person name="Agbayani A."/>
            <person name="An H.-J."/>
            <person name="Andrews-Pfannkoch C."/>
            <person name="Baldwin D."/>
            <person name="Ballew R.M."/>
            <person name="Basu A."/>
            <person name="Baxendale J."/>
            <person name="Bayraktaroglu L."/>
            <person name="Beasley E.M."/>
            <person name="Beeson K.Y."/>
            <person name="Benos P.V."/>
            <person name="Berman B.P."/>
            <person name="Bhandari D."/>
            <person name="Bolshakov S."/>
            <person name="Borkova D."/>
            <person name="Botchan M.R."/>
            <person name="Bouck J."/>
            <person name="Brokstein P."/>
            <person name="Brottier P."/>
            <person name="Burtis K.C."/>
            <person name="Busam D.A."/>
            <person name="Butler H."/>
            <person name="Cadieu E."/>
            <person name="Center A."/>
            <person name="Chandra I."/>
            <person name="Cherry J.M."/>
            <person name="Cawley S."/>
            <person name="Dahlke C."/>
            <person name="Davenport L.B."/>
            <person name="Davies P."/>
            <person name="de Pablos B."/>
            <person name="Delcher A."/>
            <person name="Deng Z."/>
            <person name="Mays A.D."/>
            <person name="Dew I."/>
            <person name="Dietz S.M."/>
            <person name="Dodson K."/>
            <person name="Doup L.E."/>
            <person name="Downes M."/>
            <person name="Dugan-Rocha S."/>
            <person name="Dunkov B.C."/>
            <person name="Dunn P."/>
            <person name="Durbin K.J."/>
            <person name="Evangelista C.C."/>
            <person name="Ferraz C."/>
            <person name="Ferriera S."/>
            <person name="Fleischmann W."/>
            <person name="Fosler C."/>
            <person name="Gabrielian A.E."/>
            <person name="Garg N.S."/>
            <person name="Gelbart W.M."/>
            <person name="Glasser K."/>
            <person name="Glodek A."/>
            <person name="Gong F."/>
            <person name="Gorrell J.H."/>
            <person name="Gu Z."/>
            <person name="Guan P."/>
            <person name="Harris M."/>
            <person name="Harris N.L."/>
            <person name="Harvey D.A."/>
            <person name="Heiman T.J."/>
            <person name="Hernandez J.R."/>
            <person name="Houck J."/>
            <person name="Hostin D."/>
            <person name="Houston K.A."/>
            <person name="Howland T.J."/>
            <person name="Wei M.-H."/>
            <person name="Ibegwam C."/>
            <person name="Jalali M."/>
            <person name="Kalush F."/>
            <person name="Karpen G.H."/>
            <person name="Ke Z."/>
            <person name="Kennison J.A."/>
            <person name="Ketchum K.A."/>
            <person name="Kimmel B.E."/>
            <person name="Kodira C.D."/>
            <person name="Kraft C.L."/>
            <person name="Kravitz S."/>
            <person name="Kulp D."/>
            <person name="Lai Z."/>
            <person name="Lasko P."/>
            <person name="Lei Y."/>
            <person name="Levitsky A.A."/>
            <person name="Li J.H."/>
            <person name="Li Z."/>
            <person name="Liang Y."/>
            <person name="Lin X."/>
            <person name="Liu X."/>
            <person name="Mattei B."/>
            <person name="McIntosh T.C."/>
            <person name="McLeod M.P."/>
            <person name="McPherson D."/>
            <person name="Merkulov G."/>
            <person name="Milshina N.V."/>
            <person name="Mobarry C."/>
            <person name="Morris J."/>
            <person name="Moshrefi A."/>
            <person name="Mount S.M."/>
            <person name="Moy M."/>
            <person name="Murphy B."/>
            <person name="Murphy L."/>
            <person name="Muzny D.M."/>
            <person name="Nelson D.L."/>
            <person name="Nelson D.R."/>
            <person name="Nelson K.A."/>
            <person name="Nixon K."/>
            <person name="Nusskern D.R."/>
            <person name="Pacleb J.M."/>
            <person name="Palazzolo M."/>
            <person name="Pittman G.S."/>
            <person name="Pan S."/>
            <person name="Pollard J."/>
            <person name="Puri V."/>
            <person name="Reese M.G."/>
            <person name="Reinert K."/>
            <person name="Remington K."/>
            <person name="Saunders R.D.C."/>
            <person name="Scheeler F."/>
            <person name="Shen H."/>
            <person name="Shue B.C."/>
            <person name="Siden-Kiamos I."/>
            <person name="Simpson M."/>
            <person name="Skupski M.P."/>
            <person name="Smith T.J."/>
            <person name="Spier E."/>
            <person name="Spradling A.C."/>
            <person name="Stapleton M."/>
            <person name="Strong R."/>
            <person name="Sun E."/>
            <person name="Svirskas R."/>
            <person name="Tector C."/>
            <person name="Turner R."/>
            <person name="Venter E."/>
            <person name="Wang A.H."/>
            <person name="Wang X."/>
            <person name="Wang Z.-Y."/>
            <person name="Wassarman D.A."/>
            <person name="Weinstock G.M."/>
            <person name="Weissenbach J."/>
            <person name="Williams S.M."/>
            <person name="Woodage T."/>
            <person name="Worley K.C."/>
            <person name="Wu D."/>
            <person name="Yang S."/>
            <person name="Yao Q.A."/>
            <person name="Ye J."/>
            <person name="Yeh R.-F."/>
            <person name="Zaveri J.S."/>
            <person name="Zhan M."/>
            <person name="Zhang G."/>
            <person name="Zhao Q."/>
            <person name="Zheng L."/>
            <person name="Zheng X.H."/>
            <person name="Zhong F.N."/>
            <person name="Zhong W."/>
            <person name="Zhou X."/>
            <person name="Zhu S.C."/>
            <person name="Zhu X."/>
            <person name="Smith H.O."/>
            <person name="Gibbs R.A."/>
            <person name="Myers E.W."/>
            <person name="Rubin G.M."/>
            <person name="Venter J.C."/>
        </authorList>
    </citation>
    <scope>NUCLEOTIDE SEQUENCE [LARGE SCALE GENOMIC DNA]</scope>
    <source>
        <strain>Berkeley</strain>
    </source>
</reference>
<reference key="4">
    <citation type="journal article" date="2002" name="Genome Biol.">
        <title>Annotation of the Drosophila melanogaster euchromatic genome: a systematic review.</title>
        <authorList>
            <person name="Misra S."/>
            <person name="Crosby M.A."/>
            <person name="Mungall C.J."/>
            <person name="Matthews B.B."/>
            <person name="Campbell K.S."/>
            <person name="Hradecky P."/>
            <person name="Huang Y."/>
            <person name="Kaminker J.S."/>
            <person name="Millburn G.H."/>
            <person name="Prochnik S.E."/>
            <person name="Smith C.D."/>
            <person name="Tupy J.L."/>
            <person name="Whitfield E.J."/>
            <person name="Bayraktaroglu L."/>
            <person name="Berman B.P."/>
            <person name="Bettencourt B.R."/>
            <person name="Celniker S.E."/>
            <person name="de Grey A.D.N.J."/>
            <person name="Drysdale R.A."/>
            <person name="Harris N.L."/>
            <person name="Richter J."/>
            <person name="Russo S."/>
            <person name="Schroeder A.J."/>
            <person name="Shu S.Q."/>
            <person name="Stapleton M."/>
            <person name="Yamada C."/>
            <person name="Ashburner M."/>
            <person name="Gelbart W.M."/>
            <person name="Rubin G.M."/>
            <person name="Lewis S.E."/>
        </authorList>
    </citation>
    <scope>GENOME REANNOTATION</scope>
    <source>
        <strain>Berkeley</strain>
    </source>
</reference>
<reference key="5">
    <citation type="journal article" date="2002" name="Genome Biol.">
        <title>A Drosophila full-length cDNA resource.</title>
        <authorList>
            <person name="Stapleton M."/>
            <person name="Carlson J.W."/>
            <person name="Brokstein P."/>
            <person name="Yu C."/>
            <person name="Champe M."/>
            <person name="George R.A."/>
            <person name="Guarin H."/>
            <person name="Kronmiller B."/>
            <person name="Pacleb J.M."/>
            <person name="Park S."/>
            <person name="Wan K.H."/>
            <person name="Rubin G.M."/>
            <person name="Celniker S.E."/>
        </authorList>
    </citation>
    <scope>NUCLEOTIDE SEQUENCE [LARGE SCALE MRNA]</scope>
    <source>
        <strain>Berkeley</strain>
        <tissue>Embryo</tissue>
    </source>
</reference>
<reference key="6">
    <citation type="journal article" date="2007" name="Genetics">
        <title>Pervasive and largely lineage-specific adaptive protein evolution in the dosage compensation complex of Drosophila melanogaster.</title>
        <authorList>
            <person name="Levine M.T."/>
            <person name="Holloway A.K."/>
            <person name="Arshad U."/>
            <person name="Begun D.J."/>
        </authorList>
    </citation>
    <scope>NUCLEOTIDE SEQUENCE [GENOMIC DNA] OF 34-827</scope>
    <scope>VARIANTS ASP-156 AND TYR-384</scope>
    <source>
        <strain>Mof.591A.s</strain>
        <strain>Mof.639A.s</strain>
        <strain>Mof.732A.s</strain>
        <strain>Mof.774A.s</strain>
        <strain>Mof.799A.s</strain>
        <strain>Mof.820A.s</strain>
        <strain>Mof.852A.s</strain>
        <strain>Mof.859A.s</strain>
    </source>
</reference>
<reference key="7">
    <citation type="journal article" date="2000" name="Curr. Biol.">
        <title>Ordered assembly of roX RNAs into MSL complexes on the dosage-compensated X chromosome in Drosophila.</title>
        <authorList>
            <person name="Meller V.H."/>
            <person name="Gordadze P.R."/>
            <person name="Park Y."/>
            <person name="Chu X."/>
            <person name="Stuckenholz C."/>
            <person name="Kelley R.L."/>
            <person name="Kuroda M.I."/>
        </authorList>
    </citation>
    <scope>IDENTIFICATION IN THE MSL COMPLEX</scope>
</reference>
<reference key="8">
    <citation type="journal article" date="2000" name="Mol. Cell">
        <title>Activation of transcription through histone H4 acetylation by MOF, an acetyltransferase essential for dosage compensation in Drosophila.</title>
        <authorList>
            <person name="Akhtar A."/>
            <person name="Becker P.B."/>
        </authorList>
    </citation>
    <scope>FUNCTION</scope>
    <scope>CATALYTIC ACTIVITY</scope>
    <scope>MUTAGENESIS OF GLY-691</scope>
</reference>
<reference key="9">
    <citation type="journal article" date="2000" name="Nature">
        <title>Chromodomains are protein-RNA interaction modules.</title>
        <authorList>
            <person name="Akhtar A."/>
            <person name="Zink D."/>
            <person name="Becker P.B."/>
        </authorList>
    </citation>
    <scope>FUNCTION</scope>
    <scope>IDENTIFICATION IN THE MSL COMPLEX</scope>
    <scope>SUBCELLULAR LOCATION</scope>
    <scope>DOMAIN</scope>
    <scope>MUTAGENESIS OF TYR-416; TRP-426 AND GLY-691</scope>
</reference>
<reference key="10">
    <citation type="journal article" date="2001" name="EMBO Rep.">
        <title>The histone H4 acetyltransferase MOF uses a C2HC zinc finger for substrate recognition.</title>
        <authorList>
            <person name="Akhtar A."/>
            <person name="Becker P.B."/>
        </authorList>
    </citation>
    <scope>FUNCTION</scope>
    <scope>CATALYTIC ACTIVITY</scope>
    <scope>MUTAGENESIS OF CYS-577; 578-LEU--TYR-580 AND GLY-691</scope>
</reference>
<reference key="11">
    <citation type="journal article" date="2006" name="Mol. Cell">
        <title>Nuclear pore components are involved in the transcriptional regulation of dosage compensation in Drosophila.</title>
        <authorList>
            <person name="Mendjan S."/>
            <person name="Taipale M."/>
            <person name="Kind J."/>
            <person name="Holz H."/>
            <person name="Gebhardt P."/>
            <person name="Schelder M."/>
            <person name="Vermeulen M."/>
            <person name="Buscaino A."/>
            <person name="Duncan K."/>
            <person name="Mueller J."/>
            <person name="Wilm M."/>
            <person name="Stunnenberg H.G."/>
            <person name="Saumweber H."/>
            <person name="Akhtar A."/>
        </authorList>
    </citation>
    <scope>FUNCTION</scope>
    <scope>IDENTIFICATION IN THE MSL COMPLEX</scope>
    <scope>IDENTIFICATION IN THE NSL COMPLEX</scope>
</reference>
<reference key="12">
    <citation type="journal article" date="2008" name="Cell">
        <title>Genome-wide analysis reveals MOF as a key regulator of dosage compensation and gene expression in Drosophila.</title>
        <authorList>
            <person name="Kind J."/>
            <person name="Vaquerizas J.M."/>
            <person name="Gebhardt P."/>
            <person name="Gentzel M."/>
            <person name="Luscombe N.M."/>
            <person name="Bertone P."/>
            <person name="Akhtar A."/>
        </authorList>
    </citation>
    <scope>FUNCTION</scope>
    <scope>CATALYTIC ACTIVITY</scope>
    <scope>IDENTIFICATION IN THE MSL COMPLEX</scope>
    <scope>SUBCELLULAR LOCATION</scope>
</reference>
<reference key="13">
    <citation type="journal article" date="2010" name="Mol. Cell">
        <title>The activation potential of MOF is constrained for dosage compensation.</title>
        <authorList>
            <person name="Prestel M."/>
            <person name="Feller C."/>
            <person name="Straub T."/>
            <person name="Mitloehner H."/>
            <person name="Becker P.B."/>
        </authorList>
    </citation>
    <scope>FUNCTION</scope>
    <scope>CATALYTIC ACTIVITY</scope>
    <scope>SUBCELLULAR LOCATION</scope>
    <scope>IDENTIFICATION AS PART OF THE MSL AND NSL COMPLEXES</scope>
</reference>
<reference key="14">
    <citation type="journal article" date="2010" name="Mol. Cell">
        <title>The nonspecific lethal complex is a transcriptional regulator in Drosophila.</title>
        <authorList>
            <person name="Raja S.J."/>
            <person name="Charapitsa I."/>
            <person name="Conrad T."/>
            <person name="Vaquerizas J.M."/>
            <person name="Gebhardt P."/>
            <person name="Holz H."/>
            <person name="Kadlec J."/>
            <person name="Fraterman S."/>
            <person name="Luscombe N.M."/>
            <person name="Akhtar A."/>
        </authorList>
    </citation>
    <scope>FUNCTION IN CHROMATIN MODIFICATION</scope>
    <scope>FUNCTION IN TRANSCRIPTION REGULATION</scope>
    <scope>IDENTIFICATION AS PART OF THE MSL AND NSL COMPLEXES</scope>
    <scope>SUBCELLULAR LOCATION</scope>
</reference>
<reference key="15">
    <citation type="journal article" date="2012" name="Dev. Cell">
        <title>The MOF chromobarrel domain controls genome-wide H4K16 acetylation and spreading of the MSL complex.</title>
        <authorList>
            <person name="Conrad T."/>
            <person name="Cavalli F.M."/>
            <person name="Holz H."/>
            <person name="Hallacli E."/>
            <person name="Kind J."/>
            <person name="Ilik I."/>
            <person name="Vaquerizas J.M."/>
            <person name="Luscombe N.M."/>
            <person name="Akhtar A."/>
        </authorList>
    </citation>
    <scope>FUNCTION</scope>
    <scope>CATALYTIC ACTIVITY</scope>
    <scope>IDENTIFICATION IN THE MSL COMPLEX</scope>
    <scope>SUBCELLULAR LOCATION</scope>
    <scope>DOMAIN</scope>
    <scope>MUTAGENESIS OF TYR-416 AND TRP-426</scope>
</reference>
<reference key="16">
    <citation type="journal article" date="2012" name="PLoS Genet.">
        <title>The NSL complex regulates housekeeping genes in Drosophila.</title>
        <authorList>
            <person name="Lam K.C."/>
            <person name="Muehlpfordt F."/>
            <person name="Vaquerizas J.M."/>
            <person name="Raja S.J."/>
            <person name="Holz H."/>
            <person name="Luscombe N.M."/>
            <person name="Manke T."/>
            <person name="Akhtar A."/>
        </authorList>
    </citation>
    <scope>FUNCTION</scope>
    <scope>IDENTIFICATION IN THE NSL COMPLEX</scope>
</reference>
<reference key="17">
    <citation type="journal article" date="2012" name="Mol. Cell">
        <title>MSL2 combines sensor and effector functions in homeostatic control of the Drosophila dosage compensation machinery.</title>
        <authorList>
            <person name="Villa R."/>
            <person name="Forne I."/>
            <person name="Mueller M."/>
            <person name="Imhof A."/>
            <person name="Straub T."/>
            <person name="Becker P.B."/>
        </authorList>
    </citation>
    <scope>UBIQUITINATION</scope>
</reference>
<reference key="18">
    <citation type="journal article" date="2017" name="PLoS ONE">
        <title>Ubiquitylation of the acetyltransferase MOF in Drosophila melanogaster.</title>
        <authorList>
            <person name="Schunter S."/>
            <person name="Villa R."/>
            <person name="Flynn V."/>
            <person name="Heidelberger J.B."/>
            <person name="Classen A.K."/>
            <person name="Beli P."/>
            <person name="Becker P.B."/>
        </authorList>
    </citation>
    <scope>SUBCELLULAR LOCATION</scope>
    <scope>UBIQUITINATION AT LYS-372; LYS-483; LYS-532; LYS-539; LYS-715; LYS-749; LYS-776; LYS-798 AND LYS-801</scope>
</reference>
<reference key="19">
    <citation type="journal article" date="2020" name="Cell">
        <title>Intergenerationally maintained histone H4 lysine 16 acetylation is instructive for future gene activation.</title>
        <authorList>
            <person name="Samata M."/>
            <person name="Alexiadis A."/>
            <person name="Richard G."/>
            <person name="Georgiev P."/>
            <person name="Nuebler J."/>
            <person name="Kulkarni T."/>
            <person name="Renschler G."/>
            <person name="Basilicata M.F."/>
            <person name="Zenk F.L."/>
            <person name="Shvedunova M."/>
            <person name="Semplicio G."/>
            <person name="Mirny L."/>
            <person name="Iovino N."/>
            <person name="Akhtar A."/>
        </authorList>
    </citation>
    <scope>FUNCTION</scope>
    <scope>CATALYTIC ACTIVITY</scope>
    <scope>IDENTIFICATION IN THE MSL SUBCOMPLEX</scope>
</reference>
<reference key="20">
    <citation type="journal article" date="2021" name="Cell Rep.">
        <title>Correct dosage of X chromosome transcription is controlled by a nuclear pore component.</title>
        <authorList>
            <person name="Aleman J.R."/>
            <person name="Kuhn T.M."/>
            <person name="Pascual-Garcia P."/>
            <person name="Gospocic J."/>
            <person name="Lan Y."/>
            <person name="Bonasio R."/>
            <person name="Little S.C."/>
            <person name="Capelson M."/>
        </authorList>
    </citation>
    <scope>FUNCTION</scope>
    <scope>INTERACTION WITH MGTOR</scope>
    <scope>DISRUPTION PHENOTYPE</scope>
</reference>
<reference key="21">
    <citation type="journal article" date="2005" name="J. Biol. Chem.">
        <title>Structure of the chromo barrel domain from the MOF acetyltransferase.</title>
        <authorList>
            <person name="Nielsen P.R."/>
            <person name="Nietlispach D."/>
            <person name="Buscaino A."/>
            <person name="Warner R.J."/>
            <person name="Akhtar A."/>
            <person name="Murzin A.G."/>
            <person name="Murzina N.V."/>
            <person name="Laue E.D."/>
        </authorList>
    </citation>
    <scope>STRUCTURE BY NMR OF 367-454</scope>
</reference>